<keyword id="KW-0002">3D-structure</keyword>
<keyword id="KW-0210">Decarboxylase</keyword>
<keyword id="KW-0456">Lyase</keyword>
<keyword id="KW-0460">Magnesium</keyword>
<keyword id="KW-0479">Metal-binding</keyword>
<keyword id="KW-1185">Reference proteome</keyword>
<reference key="1">
    <citation type="journal article" date="2000" name="Nature">
        <title>Complete genome sequence of Pseudomonas aeruginosa PAO1, an opportunistic pathogen.</title>
        <authorList>
            <person name="Stover C.K."/>
            <person name="Pham X.-Q.T."/>
            <person name="Erwin A.L."/>
            <person name="Mizoguchi S.D."/>
            <person name="Warrener P."/>
            <person name="Hickey M.J."/>
            <person name="Brinkman F.S.L."/>
            <person name="Hufnagle W.O."/>
            <person name="Kowalik D.J."/>
            <person name="Lagrou M."/>
            <person name="Garber R.L."/>
            <person name="Goltry L."/>
            <person name="Tolentino E."/>
            <person name="Westbrock-Wadman S."/>
            <person name="Yuan Y."/>
            <person name="Brody L.L."/>
            <person name="Coulter S.N."/>
            <person name="Folger K.R."/>
            <person name="Kas A."/>
            <person name="Larbig K."/>
            <person name="Lim R.M."/>
            <person name="Smith K.A."/>
            <person name="Spencer D.H."/>
            <person name="Wong G.K.-S."/>
            <person name="Wu Z."/>
            <person name="Paulsen I.T."/>
            <person name="Reizer J."/>
            <person name="Saier M.H. Jr."/>
            <person name="Hancock R.E.W."/>
            <person name="Lory S."/>
            <person name="Olson M.V."/>
        </authorList>
    </citation>
    <scope>NUCLEOTIDE SEQUENCE [LARGE SCALE GENOMIC DNA]</scope>
    <source>
        <strain>ATCC 15692 / DSM 22644 / CIP 104116 / JCM 14847 / LMG 12228 / 1C / PRS 101 / PAO1</strain>
    </source>
</reference>
<reference key="2">
    <citation type="journal article" date="2008" name="Biochemistry">
        <title>Structure and function of PA4872 from Pseudomonas aeruginosa, a novel class of oxaloacetate decarboxylase from the PEP mutase/isocitrate lyase superfamily.</title>
        <authorList>
            <person name="Narayanan B.C."/>
            <person name="Niu W."/>
            <person name="Han Y."/>
            <person name="Zou J."/>
            <person name="Mariano P.S."/>
            <person name="Dunaway-Mariano D."/>
            <person name="Herzberg O."/>
        </authorList>
    </citation>
    <scope>X-RAY CRYSTALLOGRAPHY (1.9 ANGSTROMS) IN COMPLEX WITH OXALATE AND MAGNESIUM</scope>
    <scope>CATALYTIC ACTIVITY</scope>
    <scope>FUNCTION</scope>
    <scope>COFACTOR</scope>
    <scope>SUBSTRATE SPECIFICITY</scope>
    <scope>ACTIVITY REGULATION</scope>
    <scope>SUBUNIT</scope>
    <scope>BIOPHYSICOCHEMICAL PROPERTIES</scope>
    <scope>MUTAGENESIS OF TYR-212 AND HIS-235</scope>
    <source>
        <strain>ATCC 15692 / DSM 22644 / CIP 104116 / JCM 14847 / LMG 12228 / 1C / PRS 101 / PAO1</strain>
    </source>
</reference>
<comment type="function">
    <text evidence="1">Catalyzes the decarboxylation of oxaloacetate into pyruvate with high efficiency. Is also able to decarboxylate 3-methyloxaloacetate. Seems to play a role in maintaining cellular concentrations of bicarbonate and pyruvate.</text>
</comment>
<comment type="catalytic activity">
    <reaction evidence="1">
        <text>oxaloacetate + H(+) = pyruvate + CO2</text>
        <dbReference type="Rhea" id="RHEA:15641"/>
        <dbReference type="ChEBI" id="CHEBI:15361"/>
        <dbReference type="ChEBI" id="CHEBI:15378"/>
        <dbReference type="ChEBI" id="CHEBI:16452"/>
        <dbReference type="ChEBI" id="CHEBI:16526"/>
        <dbReference type="EC" id="4.1.1.112"/>
    </reaction>
</comment>
<comment type="cofactor">
    <cofactor evidence="1">
        <name>Mg(2+)</name>
        <dbReference type="ChEBI" id="CHEBI:18420"/>
    </cofactor>
    <text evidence="1">Binds 1 Mg(2+) ion per subunit.</text>
</comment>
<comment type="activity regulation">
    <text evidence="1">Not inhibited by 3,3-difluoroxaloacetate.</text>
</comment>
<comment type="biophysicochemical properties">
    <kinetics>
        <KM evidence="1">2.2 mM for oxaloacetate</KM>
        <KM evidence="1">0.63 mM for 3-methyloxaloacetate</KM>
        <text>The turnover number for the oxaloacetate decarboxylation is equal to 7500 per second.</text>
    </kinetics>
    <phDependence>
        <text evidence="1">There is nearly no change in activity from pH 5 to 10.</text>
    </phDependence>
</comment>
<comment type="subunit">
    <text evidence="1">Homotetramer; dimer of dimers.</text>
</comment>
<comment type="similarity">
    <text evidence="2">Belongs to the isocitrate lyase/PEP mutase superfamily. Oxaloacetate decarboxylase family.</text>
</comment>
<gene>
    <name type="ordered locus">PA4872</name>
</gene>
<evidence type="ECO:0000269" key="1">
    <source>
    </source>
</evidence>
<evidence type="ECO:0000305" key="2"/>
<evidence type="ECO:0007829" key="3">
    <source>
        <dbReference type="PDB" id="3B8I"/>
    </source>
</evidence>
<proteinExistence type="evidence at protein level"/>
<protein>
    <recommendedName>
        <fullName>Oxaloacetate decarboxylase</fullName>
        <ecNumber>4.1.1.112</ecNumber>
    </recommendedName>
</protein>
<accession>Q9HUU1</accession>
<name>OADC_PSEAE</name>
<sequence>MHRASHHELRAMFRALLDSSRCYHTASVFDPMSARIAADLGFECGILGGSVASLQVLAAPDFALITLSEFVEQATRIGRVARLPVIADADHGYGNALNVMRTVVELERAGIAALTIEDTLLPAQFGRKSTDLICVEEGVGKIRAALEARVDPALTIIARTNAELIDVDAVIQRTLAYQEAGADGICLVGVRDFAHLEAIAEHLHIPLMLVTYGNPQLRDDARLARLGVRVVVNGHAAYFAAIKATYDCLREERGAVASDLTASELSKKYTFPEEYQAWARDYMEVKE</sequence>
<organism>
    <name type="scientific">Pseudomonas aeruginosa (strain ATCC 15692 / DSM 22644 / CIP 104116 / JCM 14847 / LMG 12228 / 1C / PRS 101 / PAO1)</name>
    <dbReference type="NCBI Taxonomy" id="208964"/>
    <lineage>
        <taxon>Bacteria</taxon>
        <taxon>Pseudomonadati</taxon>
        <taxon>Pseudomonadota</taxon>
        <taxon>Gammaproteobacteria</taxon>
        <taxon>Pseudomonadales</taxon>
        <taxon>Pseudomonadaceae</taxon>
        <taxon>Pseudomonas</taxon>
    </lineage>
</organism>
<feature type="chain" id="PRO_0000364058" description="Oxaloacetate decarboxylase">
    <location>
        <begin position="1"/>
        <end position="287"/>
    </location>
</feature>
<feature type="binding site">
    <location>
        <position position="50"/>
    </location>
    <ligand>
        <name>substrate</name>
    </ligand>
</feature>
<feature type="binding site" evidence="1">
    <location>
        <position position="88"/>
    </location>
    <ligand>
        <name>Mg(2+)</name>
        <dbReference type="ChEBI" id="CHEBI:18420"/>
    </ligand>
</feature>
<feature type="binding site">
    <location>
        <position position="159"/>
    </location>
    <ligand>
        <name>substrate</name>
    </ligand>
</feature>
<feature type="binding site">
    <location>
        <position position="235"/>
    </location>
    <ligand>
        <name>substrate</name>
    </ligand>
</feature>
<feature type="mutagenesis site" description="25-fold increase in substrate affinity and 23-fold decrease in activity." evidence="1">
    <original>Y</original>
    <variation>F</variation>
    <location>
        <position position="212"/>
    </location>
</feature>
<feature type="mutagenesis site" description="2-fold increase in substrate affinity and 15-fold decrease in activity." evidence="1">
    <original>H</original>
    <variation>A</variation>
    <location>
        <position position="235"/>
    </location>
</feature>
<feature type="mutagenesis site" description="No change in substrate affinity and 3-fold decrease in activity." evidence="1">
    <original>H</original>
    <variation>Q</variation>
    <location>
        <position position="235"/>
    </location>
</feature>
<feature type="helix" evidence="3">
    <location>
        <begin position="6"/>
        <end position="18"/>
    </location>
</feature>
<feature type="helix" evidence="3">
    <location>
        <begin position="31"/>
        <end position="39"/>
    </location>
</feature>
<feature type="strand" evidence="3">
    <location>
        <begin position="45"/>
        <end position="47"/>
    </location>
</feature>
<feature type="helix" evidence="3">
    <location>
        <begin position="49"/>
        <end position="57"/>
    </location>
</feature>
<feature type="strand" evidence="3">
    <location>
        <begin position="61"/>
        <end position="63"/>
    </location>
</feature>
<feature type="helix" evidence="3">
    <location>
        <begin position="67"/>
        <end position="78"/>
    </location>
</feature>
<feature type="strand" evidence="3">
    <location>
        <begin position="85"/>
        <end position="88"/>
    </location>
</feature>
<feature type="strand" evidence="3">
    <location>
        <begin position="93"/>
        <end position="95"/>
    </location>
</feature>
<feature type="helix" evidence="3">
    <location>
        <begin position="96"/>
        <end position="109"/>
    </location>
</feature>
<feature type="strand" evidence="3">
    <location>
        <begin position="112"/>
        <end position="117"/>
    </location>
</feature>
<feature type="turn" evidence="3">
    <location>
        <begin position="125"/>
        <end position="127"/>
    </location>
</feature>
<feature type="helix" evidence="3">
    <location>
        <begin position="135"/>
        <end position="148"/>
    </location>
</feature>
<feature type="strand" evidence="3">
    <location>
        <begin position="154"/>
        <end position="161"/>
    </location>
</feature>
<feature type="turn" evidence="3">
    <location>
        <begin position="162"/>
        <end position="164"/>
    </location>
</feature>
<feature type="helix" evidence="3">
    <location>
        <begin position="167"/>
        <end position="179"/>
    </location>
</feature>
<feature type="strand" evidence="3">
    <location>
        <begin position="183"/>
        <end position="188"/>
    </location>
</feature>
<feature type="helix" evidence="3">
    <location>
        <begin position="193"/>
        <end position="200"/>
    </location>
</feature>
<feature type="strand" evidence="3">
    <location>
        <begin position="207"/>
        <end position="210"/>
    </location>
</feature>
<feature type="helix" evidence="3">
    <location>
        <begin position="215"/>
        <end position="217"/>
    </location>
</feature>
<feature type="helix" evidence="3">
    <location>
        <begin position="220"/>
        <end position="225"/>
    </location>
</feature>
<feature type="strand" evidence="3">
    <location>
        <begin position="228"/>
        <end position="232"/>
    </location>
</feature>
<feature type="helix" evidence="3">
    <location>
        <begin position="236"/>
        <end position="253"/>
    </location>
</feature>
<feature type="helix" evidence="3">
    <location>
        <begin position="262"/>
        <end position="268"/>
    </location>
</feature>
<feature type="helix" evidence="3">
    <location>
        <begin position="272"/>
        <end position="283"/>
    </location>
</feature>
<dbReference type="EC" id="4.1.1.112"/>
<dbReference type="EMBL" id="AE004091">
    <property type="protein sequence ID" value="AAG08257.1"/>
    <property type="molecule type" value="Genomic_DNA"/>
</dbReference>
<dbReference type="PIR" id="D83038">
    <property type="entry name" value="D83038"/>
</dbReference>
<dbReference type="RefSeq" id="NP_253559.1">
    <property type="nucleotide sequence ID" value="NC_002516.2"/>
</dbReference>
<dbReference type="RefSeq" id="WP_003121125.1">
    <property type="nucleotide sequence ID" value="NZ_QZGE01000002.1"/>
</dbReference>
<dbReference type="PDB" id="3B8I">
    <property type="method" value="X-ray"/>
    <property type="resolution" value="1.90 A"/>
    <property type="chains" value="A/B/C/D/E/F=1-287"/>
</dbReference>
<dbReference type="PDBsum" id="3B8I"/>
<dbReference type="SMR" id="Q9HUU1"/>
<dbReference type="STRING" id="208964.PA4872"/>
<dbReference type="BindingDB" id="Q9HUU1"/>
<dbReference type="PaxDb" id="208964-PA4872"/>
<dbReference type="GeneID" id="878100"/>
<dbReference type="KEGG" id="pae:PA4872"/>
<dbReference type="PATRIC" id="fig|208964.12.peg.5105"/>
<dbReference type="PseudoCAP" id="PA4872"/>
<dbReference type="HOGENOM" id="CLU_027389_3_2_6"/>
<dbReference type="InParanoid" id="Q9HUU1"/>
<dbReference type="OrthoDB" id="9771433at2"/>
<dbReference type="PhylomeDB" id="Q9HUU1"/>
<dbReference type="BioCyc" id="MetaCyc:MONOMER-22047"/>
<dbReference type="BioCyc" id="PAER208964:G1FZ6-4986-MONOMER"/>
<dbReference type="BRENDA" id="4.1.1.112">
    <property type="organism ID" value="5087"/>
</dbReference>
<dbReference type="EvolutionaryTrace" id="Q9HUU1"/>
<dbReference type="Proteomes" id="UP000002438">
    <property type="component" value="Chromosome"/>
</dbReference>
<dbReference type="GO" id="GO:0000287">
    <property type="term" value="F:magnesium ion binding"/>
    <property type="evidence" value="ECO:0007669"/>
    <property type="project" value="UniProtKB-UniRule"/>
</dbReference>
<dbReference type="GO" id="GO:0046421">
    <property type="term" value="F:methylisocitrate lyase activity"/>
    <property type="evidence" value="ECO:0000318"/>
    <property type="project" value="GO_Central"/>
</dbReference>
<dbReference type="GO" id="GO:0008948">
    <property type="term" value="F:oxaloacetate decarboxylase activity"/>
    <property type="evidence" value="ECO:0007669"/>
    <property type="project" value="UniProtKB-UniRule"/>
</dbReference>
<dbReference type="GO" id="GO:0006107">
    <property type="term" value="P:oxaloacetate metabolic process"/>
    <property type="evidence" value="ECO:0007669"/>
    <property type="project" value="UniProtKB-UniRule"/>
</dbReference>
<dbReference type="GO" id="GO:0019629">
    <property type="term" value="P:propionate catabolic process, 2-methylcitrate cycle"/>
    <property type="evidence" value="ECO:0000318"/>
    <property type="project" value="GO_Central"/>
</dbReference>
<dbReference type="GO" id="GO:0042866">
    <property type="term" value="P:pyruvate biosynthetic process"/>
    <property type="evidence" value="ECO:0007669"/>
    <property type="project" value="UniProtKB-UniRule"/>
</dbReference>
<dbReference type="CDD" id="cd00377">
    <property type="entry name" value="ICL_PEPM"/>
    <property type="match status" value="1"/>
</dbReference>
<dbReference type="FunFam" id="3.20.20.60:FF:000015">
    <property type="entry name" value="Oxaloacetate decarboxylase"/>
    <property type="match status" value="1"/>
</dbReference>
<dbReference type="Gene3D" id="3.20.20.60">
    <property type="entry name" value="Phosphoenolpyruvate-binding domains"/>
    <property type="match status" value="1"/>
</dbReference>
<dbReference type="HAMAP" id="MF_01299">
    <property type="entry name" value="OadC"/>
    <property type="match status" value="1"/>
</dbReference>
<dbReference type="InterPro" id="IPR039556">
    <property type="entry name" value="ICL/PEPM"/>
</dbReference>
<dbReference type="InterPro" id="IPR023687">
    <property type="entry name" value="Oxaloacetate_deCOase_bac"/>
</dbReference>
<dbReference type="InterPro" id="IPR015813">
    <property type="entry name" value="Pyrv/PenolPyrv_kinase-like_dom"/>
</dbReference>
<dbReference type="InterPro" id="IPR040442">
    <property type="entry name" value="Pyrv_kinase-like_dom_sf"/>
</dbReference>
<dbReference type="PANTHER" id="PTHR42905:SF3">
    <property type="entry name" value="OXALOACETATE DECARBOXYLASE"/>
    <property type="match status" value="1"/>
</dbReference>
<dbReference type="PANTHER" id="PTHR42905">
    <property type="entry name" value="PHOSPHOENOLPYRUVATE CARBOXYLASE"/>
    <property type="match status" value="1"/>
</dbReference>
<dbReference type="Pfam" id="PF13714">
    <property type="entry name" value="PEP_mutase"/>
    <property type="match status" value="1"/>
</dbReference>
<dbReference type="SUPFAM" id="SSF51621">
    <property type="entry name" value="Phosphoenolpyruvate/pyruvate domain"/>
    <property type="match status" value="1"/>
</dbReference>